<comment type="function">
    <text evidence="1">Plays a critical role in the incorporation of lipoproteins in the outer membrane after they are released by the LolA protein.</text>
</comment>
<comment type="subunit">
    <text evidence="1">Monomer.</text>
</comment>
<comment type="subcellular location">
    <subcellularLocation>
        <location evidence="1">Cell outer membrane</location>
        <topology evidence="1">Lipid-anchor</topology>
    </subcellularLocation>
</comment>
<comment type="similarity">
    <text evidence="1">Belongs to the LolB family.</text>
</comment>
<evidence type="ECO:0000255" key="1">
    <source>
        <dbReference type="HAMAP-Rule" id="MF_00233"/>
    </source>
</evidence>
<dbReference type="EMBL" id="AE013598">
    <property type="protein sequence ID" value="AAW76859.1"/>
    <property type="molecule type" value="Genomic_DNA"/>
</dbReference>
<dbReference type="SMR" id="Q5GWR2"/>
<dbReference type="STRING" id="291331.XOO3605"/>
<dbReference type="KEGG" id="xoo:XOO3605"/>
<dbReference type="HOGENOM" id="CLU_092816_2_1_6"/>
<dbReference type="Proteomes" id="UP000006735">
    <property type="component" value="Chromosome"/>
</dbReference>
<dbReference type="GO" id="GO:0009279">
    <property type="term" value="C:cell outer membrane"/>
    <property type="evidence" value="ECO:0007669"/>
    <property type="project" value="UniProtKB-SubCell"/>
</dbReference>
<dbReference type="GO" id="GO:0044874">
    <property type="term" value="P:lipoprotein localization to outer membrane"/>
    <property type="evidence" value="ECO:0007669"/>
    <property type="project" value="UniProtKB-UniRule"/>
</dbReference>
<dbReference type="GO" id="GO:0015031">
    <property type="term" value="P:protein transport"/>
    <property type="evidence" value="ECO:0007669"/>
    <property type="project" value="UniProtKB-KW"/>
</dbReference>
<dbReference type="CDD" id="cd16326">
    <property type="entry name" value="LolB"/>
    <property type="match status" value="1"/>
</dbReference>
<dbReference type="Gene3D" id="2.50.20.10">
    <property type="entry name" value="Lipoprotein localisation LolA/LolB/LppX"/>
    <property type="match status" value="1"/>
</dbReference>
<dbReference type="HAMAP" id="MF_00233">
    <property type="entry name" value="LolB"/>
    <property type="match status" value="1"/>
</dbReference>
<dbReference type="InterPro" id="IPR029046">
    <property type="entry name" value="LolA/LolB/LppX"/>
</dbReference>
<dbReference type="InterPro" id="IPR004565">
    <property type="entry name" value="OM_lipoprot_LolB"/>
</dbReference>
<dbReference type="NCBIfam" id="TIGR00548">
    <property type="entry name" value="lolB"/>
    <property type="match status" value="1"/>
</dbReference>
<dbReference type="Pfam" id="PF03550">
    <property type="entry name" value="LolB"/>
    <property type="match status" value="1"/>
</dbReference>
<dbReference type="SUPFAM" id="SSF89392">
    <property type="entry name" value="Prokaryotic lipoproteins and lipoprotein localization factors"/>
    <property type="match status" value="1"/>
</dbReference>
<dbReference type="PROSITE" id="PS51257">
    <property type="entry name" value="PROKAR_LIPOPROTEIN"/>
    <property type="match status" value="1"/>
</dbReference>
<feature type="signal peptide" evidence="1">
    <location>
        <begin position="1"/>
        <end position="20"/>
    </location>
</feature>
<feature type="chain" id="PRO_1000021693" description="Outer-membrane lipoprotein LolB">
    <location>
        <begin position="21"/>
        <end position="217"/>
    </location>
</feature>
<feature type="lipid moiety-binding region" description="N-palmitoyl cysteine" evidence="1">
    <location>
        <position position="21"/>
    </location>
</feature>
<feature type="lipid moiety-binding region" description="S-diacylglycerol cysteine" evidence="1">
    <location>
        <position position="21"/>
    </location>
</feature>
<gene>
    <name evidence="1" type="primary">lolB</name>
    <name type="ordered locus">XOO3605</name>
</gene>
<sequence>MSKALRTLALSGLVLVGLSACVSVPRGQGSGAAVVEQISDSARQGEAARQAWLQQHPNWSFQGRVAISKDRNGGSGRIDWQQDGPRYRVQLSAPVTRQSWVLTGDTTTGAGRLEGLDGGPRSGSDAEKVLLEATGWTIPVNQMPDWVRALRIADAGAARVELDAAGRPRTVQQDGWTIDFLAWTPASADQPELPQRIEARYGEAKVRLLVDQWTVSP</sequence>
<name>LOLB_XANOR</name>
<accession>Q5GWR2</accession>
<reference key="1">
    <citation type="journal article" date="2005" name="Nucleic Acids Res.">
        <title>The genome sequence of Xanthomonas oryzae pathovar oryzae KACC10331, the bacterial blight pathogen of rice.</title>
        <authorList>
            <person name="Lee B.-M."/>
            <person name="Park Y.-J."/>
            <person name="Park D.-S."/>
            <person name="Kang H.-W."/>
            <person name="Kim J.-G."/>
            <person name="Song E.-S."/>
            <person name="Park I.-C."/>
            <person name="Yoon U.-H."/>
            <person name="Hahn J.-H."/>
            <person name="Koo B.-S."/>
            <person name="Lee G.-B."/>
            <person name="Kim H."/>
            <person name="Park H.-S."/>
            <person name="Yoon K.-O."/>
            <person name="Kim J.-H."/>
            <person name="Jung C.-H."/>
            <person name="Koh N.-H."/>
            <person name="Seo J.-S."/>
            <person name="Go S.-J."/>
        </authorList>
    </citation>
    <scope>NUCLEOTIDE SEQUENCE [LARGE SCALE GENOMIC DNA]</scope>
    <source>
        <strain>KACC10331 / KXO85</strain>
    </source>
</reference>
<proteinExistence type="inferred from homology"/>
<organism>
    <name type="scientific">Xanthomonas oryzae pv. oryzae (strain KACC10331 / KXO85)</name>
    <dbReference type="NCBI Taxonomy" id="291331"/>
    <lineage>
        <taxon>Bacteria</taxon>
        <taxon>Pseudomonadati</taxon>
        <taxon>Pseudomonadota</taxon>
        <taxon>Gammaproteobacteria</taxon>
        <taxon>Lysobacterales</taxon>
        <taxon>Lysobacteraceae</taxon>
        <taxon>Xanthomonas</taxon>
    </lineage>
</organism>
<keyword id="KW-0998">Cell outer membrane</keyword>
<keyword id="KW-0143">Chaperone</keyword>
<keyword id="KW-0449">Lipoprotein</keyword>
<keyword id="KW-0472">Membrane</keyword>
<keyword id="KW-0564">Palmitate</keyword>
<keyword id="KW-0653">Protein transport</keyword>
<keyword id="KW-1185">Reference proteome</keyword>
<keyword id="KW-0732">Signal</keyword>
<keyword id="KW-0813">Transport</keyword>
<protein>
    <recommendedName>
        <fullName evidence="1">Outer-membrane lipoprotein LolB</fullName>
    </recommendedName>
</protein>